<proteinExistence type="inferred from homology"/>
<comment type="function">
    <text evidence="1">Catalyzes the methylthiolation of N6-(dimethylallyl)adenosine (i(6)A), leading to the formation of 2-methylthio-N6-(dimethylallyl)adenosine (ms(2)i(6)A) at position 37 in tRNAs that read codons beginning with uridine.</text>
</comment>
<comment type="catalytic activity">
    <reaction evidence="1">
        <text>N(6)-dimethylallyladenosine(37) in tRNA + (sulfur carrier)-SH + AH2 + 2 S-adenosyl-L-methionine = 2-methylsulfanyl-N(6)-dimethylallyladenosine(37) in tRNA + (sulfur carrier)-H + 5'-deoxyadenosine + L-methionine + A + S-adenosyl-L-homocysteine + 2 H(+)</text>
        <dbReference type="Rhea" id="RHEA:37067"/>
        <dbReference type="Rhea" id="RHEA-COMP:10375"/>
        <dbReference type="Rhea" id="RHEA-COMP:10376"/>
        <dbReference type="Rhea" id="RHEA-COMP:14737"/>
        <dbReference type="Rhea" id="RHEA-COMP:14739"/>
        <dbReference type="ChEBI" id="CHEBI:13193"/>
        <dbReference type="ChEBI" id="CHEBI:15378"/>
        <dbReference type="ChEBI" id="CHEBI:17319"/>
        <dbReference type="ChEBI" id="CHEBI:17499"/>
        <dbReference type="ChEBI" id="CHEBI:29917"/>
        <dbReference type="ChEBI" id="CHEBI:57844"/>
        <dbReference type="ChEBI" id="CHEBI:57856"/>
        <dbReference type="ChEBI" id="CHEBI:59789"/>
        <dbReference type="ChEBI" id="CHEBI:64428"/>
        <dbReference type="ChEBI" id="CHEBI:74415"/>
        <dbReference type="ChEBI" id="CHEBI:74417"/>
        <dbReference type="EC" id="2.8.4.3"/>
    </reaction>
</comment>
<comment type="cofactor">
    <cofactor evidence="1">
        <name>[4Fe-4S] cluster</name>
        <dbReference type="ChEBI" id="CHEBI:49883"/>
    </cofactor>
    <text evidence="1">Binds 2 [4Fe-4S] clusters. One cluster is coordinated with 3 cysteines and an exchangeable S-adenosyl-L-methionine.</text>
</comment>
<comment type="subunit">
    <text evidence="1">Monomer.</text>
</comment>
<comment type="subcellular location">
    <subcellularLocation>
        <location evidence="1">Cytoplasm</location>
    </subcellularLocation>
</comment>
<comment type="similarity">
    <text evidence="1">Belongs to the methylthiotransferase family. MiaB subfamily.</text>
</comment>
<evidence type="ECO:0000255" key="1">
    <source>
        <dbReference type="HAMAP-Rule" id="MF_01864"/>
    </source>
</evidence>
<evidence type="ECO:0000255" key="2">
    <source>
        <dbReference type="PROSITE-ProRule" id="PRU01266"/>
    </source>
</evidence>
<organism>
    <name type="scientific">Salmonella heidelberg (strain SL476)</name>
    <dbReference type="NCBI Taxonomy" id="454169"/>
    <lineage>
        <taxon>Bacteria</taxon>
        <taxon>Pseudomonadati</taxon>
        <taxon>Pseudomonadota</taxon>
        <taxon>Gammaproteobacteria</taxon>
        <taxon>Enterobacterales</taxon>
        <taxon>Enterobacteriaceae</taxon>
        <taxon>Salmonella</taxon>
    </lineage>
</organism>
<keyword id="KW-0004">4Fe-4S</keyword>
<keyword id="KW-0963">Cytoplasm</keyword>
<keyword id="KW-0408">Iron</keyword>
<keyword id="KW-0411">Iron-sulfur</keyword>
<keyword id="KW-0479">Metal-binding</keyword>
<keyword id="KW-0949">S-adenosyl-L-methionine</keyword>
<keyword id="KW-0808">Transferase</keyword>
<keyword id="KW-0819">tRNA processing</keyword>
<protein>
    <recommendedName>
        <fullName evidence="1">tRNA-2-methylthio-N(6)-dimethylallyladenosine synthase</fullName>
        <ecNumber evidence="1">2.8.4.3</ecNumber>
    </recommendedName>
    <alternativeName>
        <fullName evidence="1">(Dimethylallyl)adenosine tRNA methylthiotransferase MiaB</fullName>
    </alternativeName>
    <alternativeName>
        <fullName evidence="1">tRNA-i(6)A37 methylthiotransferase</fullName>
    </alternativeName>
</protein>
<reference key="1">
    <citation type="journal article" date="2011" name="J. Bacteriol.">
        <title>Comparative genomics of 28 Salmonella enterica isolates: evidence for CRISPR-mediated adaptive sublineage evolution.</title>
        <authorList>
            <person name="Fricke W.F."/>
            <person name="Mammel M.K."/>
            <person name="McDermott P.F."/>
            <person name="Tartera C."/>
            <person name="White D.G."/>
            <person name="Leclerc J.E."/>
            <person name="Ravel J."/>
            <person name="Cebula T.A."/>
        </authorList>
    </citation>
    <scope>NUCLEOTIDE SEQUENCE [LARGE SCALE GENOMIC DNA]</scope>
    <source>
        <strain>SL476</strain>
    </source>
</reference>
<sequence>MTKKLHIKTWGCQMNEYDSSKMADLLDATHGYQLTDVAEEADVLLLNTCSIREKAQEKVFHQLGRWRLLKEKNPDLIIGVGGCVASQEGEHIRQRAHYVDIIFGPQTLHRLPEMINSVRGDRSPVVDISFPEIEKFDRLPEPRAEGPTAFVSIMEGCNKYCTYCVVPYTRGEEVSRPSDDILFEIAQLAAQGVREVNLLGQNVNAWRGENYDGTTGTFADLLRLVAAIDGIDRIRFTTSHPIEFTDDIIEVYRDTPELVSFLHLPVQSGSDRVLNLMGRTHTALEYKAIIRKLRAARPDIQISSDFIVGFPGETTDDFEKTMKLIADVNFDMSYSFIFSARPGTPAADMVDDVPEEEKKQRLYILQERINQQAMAWSRRMLGTTQRILVEGTSRKNIMELSGRTENNRVVNFEGTPEMIGKFVDVEITDVYPNSLRGKVVRTEDEMGLRVAETPESVIARTRKENELGVGFYQP</sequence>
<accession>B4TB74</accession>
<name>MIAB_SALHS</name>
<feature type="chain" id="PRO_0000374525" description="tRNA-2-methylthio-N(6)-dimethylallyladenosine synthase">
    <location>
        <begin position="1"/>
        <end position="474"/>
    </location>
</feature>
<feature type="domain" description="MTTase N-terminal" evidence="1">
    <location>
        <begin position="3"/>
        <end position="120"/>
    </location>
</feature>
<feature type="domain" description="Radical SAM core" evidence="2">
    <location>
        <begin position="143"/>
        <end position="375"/>
    </location>
</feature>
<feature type="domain" description="TRAM" evidence="1">
    <location>
        <begin position="378"/>
        <end position="441"/>
    </location>
</feature>
<feature type="binding site" evidence="1">
    <location>
        <position position="12"/>
    </location>
    <ligand>
        <name>[4Fe-4S] cluster</name>
        <dbReference type="ChEBI" id="CHEBI:49883"/>
        <label>1</label>
    </ligand>
</feature>
<feature type="binding site" evidence="1">
    <location>
        <position position="49"/>
    </location>
    <ligand>
        <name>[4Fe-4S] cluster</name>
        <dbReference type="ChEBI" id="CHEBI:49883"/>
        <label>1</label>
    </ligand>
</feature>
<feature type="binding site" evidence="1">
    <location>
        <position position="83"/>
    </location>
    <ligand>
        <name>[4Fe-4S] cluster</name>
        <dbReference type="ChEBI" id="CHEBI:49883"/>
        <label>1</label>
    </ligand>
</feature>
<feature type="binding site" evidence="1">
    <location>
        <position position="157"/>
    </location>
    <ligand>
        <name>[4Fe-4S] cluster</name>
        <dbReference type="ChEBI" id="CHEBI:49883"/>
        <label>2</label>
        <note>4Fe-4S-S-AdoMet</note>
    </ligand>
</feature>
<feature type="binding site" evidence="1">
    <location>
        <position position="161"/>
    </location>
    <ligand>
        <name>[4Fe-4S] cluster</name>
        <dbReference type="ChEBI" id="CHEBI:49883"/>
        <label>2</label>
        <note>4Fe-4S-S-AdoMet</note>
    </ligand>
</feature>
<feature type="binding site" evidence="1">
    <location>
        <position position="164"/>
    </location>
    <ligand>
        <name>[4Fe-4S] cluster</name>
        <dbReference type="ChEBI" id="CHEBI:49883"/>
        <label>2</label>
        <note>4Fe-4S-S-AdoMet</note>
    </ligand>
</feature>
<gene>
    <name evidence="1" type="primary">miaB</name>
    <name type="ordered locus">SeHA_C0788</name>
</gene>
<dbReference type="EC" id="2.8.4.3" evidence="1"/>
<dbReference type="EMBL" id="CP001120">
    <property type="protein sequence ID" value="ACF69195.1"/>
    <property type="molecule type" value="Genomic_DNA"/>
</dbReference>
<dbReference type="RefSeq" id="WP_001519200.1">
    <property type="nucleotide sequence ID" value="NC_011083.1"/>
</dbReference>
<dbReference type="SMR" id="B4TB74"/>
<dbReference type="KEGG" id="seh:SeHA_C0788"/>
<dbReference type="HOGENOM" id="CLU_018697_2_0_6"/>
<dbReference type="Proteomes" id="UP000001866">
    <property type="component" value="Chromosome"/>
</dbReference>
<dbReference type="GO" id="GO:0005829">
    <property type="term" value="C:cytosol"/>
    <property type="evidence" value="ECO:0007669"/>
    <property type="project" value="TreeGrafter"/>
</dbReference>
<dbReference type="GO" id="GO:0051539">
    <property type="term" value="F:4 iron, 4 sulfur cluster binding"/>
    <property type="evidence" value="ECO:0007669"/>
    <property type="project" value="UniProtKB-UniRule"/>
</dbReference>
<dbReference type="GO" id="GO:0046872">
    <property type="term" value="F:metal ion binding"/>
    <property type="evidence" value="ECO:0007669"/>
    <property type="project" value="UniProtKB-KW"/>
</dbReference>
<dbReference type="GO" id="GO:0035597">
    <property type="term" value="F:N6-isopentenyladenosine methylthiotransferase activity"/>
    <property type="evidence" value="ECO:0007669"/>
    <property type="project" value="TreeGrafter"/>
</dbReference>
<dbReference type="CDD" id="cd01335">
    <property type="entry name" value="Radical_SAM"/>
    <property type="match status" value="1"/>
</dbReference>
<dbReference type="FunFam" id="3.40.50.12160:FF:000001">
    <property type="entry name" value="tRNA-2-methylthio-N(6)-dimethylallyladenosine synthase"/>
    <property type="match status" value="1"/>
</dbReference>
<dbReference type="FunFam" id="3.80.30.20:FF:000001">
    <property type="entry name" value="tRNA-2-methylthio-N(6)-dimethylallyladenosine synthase 2"/>
    <property type="match status" value="1"/>
</dbReference>
<dbReference type="Gene3D" id="3.40.50.12160">
    <property type="entry name" value="Methylthiotransferase, N-terminal domain"/>
    <property type="match status" value="1"/>
</dbReference>
<dbReference type="Gene3D" id="3.80.30.20">
    <property type="entry name" value="tm_1862 like domain"/>
    <property type="match status" value="1"/>
</dbReference>
<dbReference type="HAMAP" id="MF_01864">
    <property type="entry name" value="tRNA_metthiotr_MiaB"/>
    <property type="match status" value="1"/>
</dbReference>
<dbReference type="InterPro" id="IPR006638">
    <property type="entry name" value="Elp3/MiaA/NifB-like_rSAM"/>
</dbReference>
<dbReference type="InterPro" id="IPR005839">
    <property type="entry name" value="Methylthiotransferase"/>
</dbReference>
<dbReference type="InterPro" id="IPR020612">
    <property type="entry name" value="Methylthiotransferase_CS"/>
</dbReference>
<dbReference type="InterPro" id="IPR013848">
    <property type="entry name" value="Methylthiotransferase_N"/>
</dbReference>
<dbReference type="InterPro" id="IPR038135">
    <property type="entry name" value="Methylthiotransferase_N_sf"/>
</dbReference>
<dbReference type="InterPro" id="IPR006463">
    <property type="entry name" value="MiaB_methiolase"/>
</dbReference>
<dbReference type="InterPro" id="IPR007197">
    <property type="entry name" value="rSAM"/>
</dbReference>
<dbReference type="InterPro" id="IPR023404">
    <property type="entry name" value="rSAM_horseshoe"/>
</dbReference>
<dbReference type="InterPro" id="IPR002792">
    <property type="entry name" value="TRAM_dom"/>
</dbReference>
<dbReference type="NCBIfam" id="TIGR01574">
    <property type="entry name" value="miaB-methiolase"/>
    <property type="match status" value="1"/>
</dbReference>
<dbReference type="NCBIfam" id="TIGR00089">
    <property type="entry name" value="MiaB/RimO family radical SAM methylthiotransferase"/>
    <property type="match status" value="1"/>
</dbReference>
<dbReference type="PANTHER" id="PTHR43020">
    <property type="entry name" value="CDK5 REGULATORY SUBUNIT-ASSOCIATED PROTEIN 1"/>
    <property type="match status" value="1"/>
</dbReference>
<dbReference type="PANTHER" id="PTHR43020:SF2">
    <property type="entry name" value="MITOCHONDRIAL TRNA METHYLTHIOTRANSFERASE CDK5RAP1"/>
    <property type="match status" value="1"/>
</dbReference>
<dbReference type="Pfam" id="PF04055">
    <property type="entry name" value="Radical_SAM"/>
    <property type="match status" value="1"/>
</dbReference>
<dbReference type="Pfam" id="PF01938">
    <property type="entry name" value="TRAM"/>
    <property type="match status" value="1"/>
</dbReference>
<dbReference type="Pfam" id="PF00919">
    <property type="entry name" value="UPF0004"/>
    <property type="match status" value="1"/>
</dbReference>
<dbReference type="SFLD" id="SFLDF00273">
    <property type="entry name" value="(dimethylallyl)adenosine_tRNA"/>
    <property type="match status" value="1"/>
</dbReference>
<dbReference type="SFLD" id="SFLDG01082">
    <property type="entry name" value="B12-binding_domain_containing"/>
    <property type="match status" value="1"/>
</dbReference>
<dbReference type="SFLD" id="SFLDS00029">
    <property type="entry name" value="Radical_SAM"/>
    <property type="match status" value="1"/>
</dbReference>
<dbReference type="SMART" id="SM00729">
    <property type="entry name" value="Elp3"/>
    <property type="match status" value="1"/>
</dbReference>
<dbReference type="SUPFAM" id="SSF102114">
    <property type="entry name" value="Radical SAM enzymes"/>
    <property type="match status" value="1"/>
</dbReference>
<dbReference type="PROSITE" id="PS51449">
    <property type="entry name" value="MTTASE_N"/>
    <property type="match status" value="1"/>
</dbReference>
<dbReference type="PROSITE" id="PS01278">
    <property type="entry name" value="MTTASE_RADICAL"/>
    <property type="match status" value="1"/>
</dbReference>
<dbReference type="PROSITE" id="PS51918">
    <property type="entry name" value="RADICAL_SAM"/>
    <property type="match status" value="1"/>
</dbReference>
<dbReference type="PROSITE" id="PS50926">
    <property type="entry name" value="TRAM"/>
    <property type="match status" value="1"/>
</dbReference>